<organism>
    <name type="scientific">Escherichia coli (strain K12)</name>
    <dbReference type="NCBI Taxonomy" id="83333"/>
    <lineage>
        <taxon>Bacteria</taxon>
        <taxon>Pseudomonadati</taxon>
        <taxon>Pseudomonadota</taxon>
        <taxon>Gammaproteobacteria</taxon>
        <taxon>Enterobacterales</taxon>
        <taxon>Enterobacteriaceae</taxon>
        <taxon>Escherichia</taxon>
    </lineage>
</organism>
<dbReference type="EC" id="2.7.7.89" evidence="7 18 20 21 22"/>
<dbReference type="EC" id="2.7.7.42" evidence="6 22"/>
<dbReference type="EMBL" id="Z21844">
    <property type="protein sequence ID" value="CAA79892.1"/>
    <property type="molecule type" value="Genomic_DNA"/>
</dbReference>
<dbReference type="EMBL" id="U00096">
    <property type="protein sequence ID" value="AAC76089.1"/>
    <property type="molecule type" value="Genomic_DNA"/>
</dbReference>
<dbReference type="EMBL" id="AP009048">
    <property type="protein sequence ID" value="BAE77104.1"/>
    <property type="molecule type" value="Genomic_DNA"/>
</dbReference>
<dbReference type="PIR" id="C65093">
    <property type="entry name" value="C65093"/>
</dbReference>
<dbReference type="RefSeq" id="NP_417525.1">
    <property type="nucleotide sequence ID" value="NC_000913.3"/>
</dbReference>
<dbReference type="RefSeq" id="WP_001301081.1">
    <property type="nucleotide sequence ID" value="NZ_SSZK01000028.1"/>
</dbReference>
<dbReference type="PDB" id="1V4A">
    <property type="method" value="X-ray"/>
    <property type="resolution" value="2.00 A"/>
    <property type="chains" value="A=1-440"/>
</dbReference>
<dbReference type="PDB" id="3K7D">
    <property type="method" value="X-ray"/>
    <property type="resolution" value="2.40 A"/>
    <property type="chains" value="A/B=449-946"/>
</dbReference>
<dbReference type="PDBsum" id="1V4A"/>
<dbReference type="PDBsum" id="3K7D"/>
<dbReference type="SMR" id="P30870"/>
<dbReference type="BioGRID" id="4261515">
    <property type="interactions" value="5"/>
</dbReference>
<dbReference type="DIP" id="DIP-9780N"/>
<dbReference type="FunCoup" id="P30870">
    <property type="interactions" value="262"/>
</dbReference>
<dbReference type="IntAct" id="P30870">
    <property type="interactions" value="2"/>
</dbReference>
<dbReference type="STRING" id="511145.b3053"/>
<dbReference type="jPOST" id="P30870"/>
<dbReference type="PaxDb" id="511145-b3053"/>
<dbReference type="EnsemblBacteria" id="AAC76089">
    <property type="protein sequence ID" value="AAC76089"/>
    <property type="gene ID" value="b3053"/>
</dbReference>
<dbReference type="GeneID" id="947552"/>
<dbReference type="KEGG" id="ecj:JW3025"/>
<dbReference type="KEGG" id="eco:b3053"/>
<dbReference type="KEGG" id="ecoc:C3026_16680"/>
<dbReference type="PATRIC" id="fig|1411691.4.peg.3678"/>
<dbReference type="EchoBASE" id="EB1559"/>
<dbReference type="eggNOG" id="COG1391">
    <property type="taxonomic scope" value="Bacteria"/>
</dbReference>
<dbReference type="HOGENOM" id="CLU_006233_0_1_6"/>
<dbReference type="InParanoid" id="P30870"/>
<dbReference type="OMA" id="EFMVQYA"/>
<dbReference type="OrthoDB" id="9759366at2"/>
<dbReference type="PhylomeDB" id="P30870"/>
<dbReference type="BioCyc" id="EcoCyc:GLNE-MONOMER"/>
<dbReference type="BioCyc" id="MetaCyc:GLNE-MONOMER"/>
<dbReference type="BRENDA" id="2.7.7.42">
    <property type="organism ID" value="2026"/>
</dbReference>
<dbReference type="BRENDA" id="2.7.7.89">
    <property type="organism ID" value="2026"/>
</dbReference>
<dbReference type="EvolutionaryTrace" id="P30870"/>
<dbReference type="PRO" id="PR:P30870"/>
<dbReference type="Proteomes" id="UP000000625">
    <property type="component" value="Chromosome"/>
</dbReference>
<dbReference type="GO" id="GO:0005829">
    <property type="term" value="C:cytosol"/>
    <property type="evidence" value="ECO:0000314"/>
    <property type="project" value="EcoCyc"/>
</dbReference>
<dbReference type="GO" id="GO:0008882">
    <property type="term" value="F:[glutamate-ammonia-ligase] adenylyltransferase activity"/>
    <property type="evidence" value="ECO:0000314"/>
    <property type="project" value="UniProtKB"/>
</dbReference>
<dbReference type="GO" id="GO:0047388">
    <property type="term" value="F:[glutamine synthetase]-adenylyl-L-tyrosine phosphorylase activity"/>
    <property type="evidence" value="ECO:0007669"/>
    <property type="project" value="UniProtKB-EC"/>
</dbReference>
<dbReference type="GO" id="GO:0005524">
    <property type="term" value="F:ATP binding"/>
    <property type="evidence" value="ECO:0000314"/>
    <property type="project" value="UniProtKB"/>
</dbReference>
<dbReference type="GO" id="GO:0000287">
    <property type="term" value="F:magnesium ion binding"/>
    <property type="evidence" value="ECO:0000314"/>
    <property type="project" value="UniProtKB"/>
</dbReference>
<dbReference type="GO" id="GO:0000820">
    <property type="term" value="P:regulation of glutamine family amino acid metabolic process"/>
    <property type="evidence" value="ECO:0000318"/>
    <property type="project" value="GO_Central"/>
</dbReference>
<dbReference type="GO" id="GO:0062132">
    <property type="term" value="P:regulation of L-glutamine biosynthetic process"/>
    <property type="evidence" value="ECO:0000314"/>
    <property type="project" value="UniProtKB"/>
</dbReference>
<dbReference type="CDD" id="cd05401">
    <property type="entry name" value="NT_GlnE_GlnD_like"/>
    <property type="match status" value="2"/>
</dbReference>
<dbReference type="FunFam" id="1.10.4050.10:FF:000001">
    <property type="entry name" value="Bifunctional glutamine synthetase adenylyltransferase/adenylyl-removing enzyme"/>
    <property type="match status" value="1"/>
</dbReference>
<dbReference type="FunFam" id="1.20.120.1510:FF:000001">
    <property type="entry name" value="Bifunctional glutamine synthetase adenylyltransferase/adenylyl-removing enzyme"/>
    <property type="match status" value="1"/>
</dbReference>
<dbReference type="FunFam" id="1.20.120.330:FF:000005">
    <property type="entry name" value="Bifunctional glutamine synthetase adenylyltransferase/adenylyl-removing enzyme"/>
    <property type="match status" value="1"/>
</dbReference>
<dbReference type="FunFam" id="1.20.120.330:FF:000008">
    <property type="entry name" value="Bifunctional glutamine synthetase adenylyltransferase/adenylyl-removing enzyme"/>
    <property type="match status" value="1"/>
</dbReference>
<dbReference type="FunFam" id="3.30.460.10:FF:000009">
    <property type="entry name" value="Bifunctional glutamine synthetase adenylyltransferase/adenylyl-removing enzyme"/>
    <property type="match status" value="1"/>
</dbReference>
<dbReference type="FunFam" id="3.30.460.10:FF:000014">
    <property type="entry name" value="Bifunctional glutamine synthetase adenylyltransferase/adenylyl-removing enzyme"/>
    <property type="match status" value="1"/>
</dbReference>
<dbReference type="Gene3D" id="1.20.120.1510">
    <property type="match status" value="1"/>
</dbReference>
<dbReference type="Gene3D" id="3.30.460.10">
    <property type="entry name" value="Beta Polymerase, domain 2"/>
    <property type="match status" value="2"/>
</dbReference>
<dbReference type="Gene3D" id="1.10.4050.10">
    <property type="entry name" value="Glutamine synthase adenylyltransferase GlnE"/>
    <property type="match status" value="1"/>
</dbReference>
<dbReference type="Gene3D" id="1.20.120.330">
    <property type="entry name" value="Nucleotidyltransferases domain 2"/>
    <property type="match status" value="2"/>
</dbReference>
<dbReference type="HAMAP" id="MF_00802">
    <property type="entry name" value="GlnE"/>
    <property type="match status" value="1"/>
</dbReference>
<dbReference type="InterPro" id="IPR023057">
    <property type="entry name" value="GlnE"/>
</dbReference>
<dbReference type="InterPro" id="IPR005190">
    <property type="entry name" value="GlnE_rpt_dom"/>
</dbReference>
<dbReference type="InterPro" id="IPR043519">
    <property type="entry name" value="NT_sf"/>
</dbReference>
<dbReference type="InterPro" id="IPR013546">
    <property type="entry name" value="PII_UdlTrfase/GS_AdlTrfase"/>
</dbReference>
<dbReference type="NCBIfam" id="NF008292">
    <property type="entry name" value="PRK11072.1"/>
    <property type="match status" value="1"/>
</dbReference>
<dbReference type="PANTHER" id="PTHR30621:SF0">
    <property type="entry name" value="BIFUNCTIONAL GLUTAMINE SYNTHETASE ADENYLYLTRANSFERASE_ADENYLYL-REMOVING ENZYME"/>
    <property type="match status" value="1"/>
</dbReference>
<dbReference type="PANTHER" id="PTHR30621">
    <property type="entry name" value="GLUTAMINE SYNTHETASE ADENYLYLTRANSFERASE"/>
    <property type="match status" value="1"/>
</dbReference>
<dbReference type="Pfam" id="PF08335">
    <property type="entry name" value="GlnD_UR_UTase"/>
    <property type="match status" value="2"/>
</dbReference>
<dbReference type="Pfam" id="PF03710">
    <property type="entry name" value="GlnE"/>
    <property type="match status" value="2"/>
</dbReference>
<dbReference type="SUPFAM" id="SSF81301">
    <property type="entry name" value="Nucleotidyltransferase"/>
    <property type="match status" value="2"/>
</dbReference>
<dbReference type="SUPFAM" id="SSF81593">
    <property type="entry name" value="Nucleotidyltransferase substrate binding subunit/domain"/>
    <property type="match status" value="2"/>
</dbReference>
<sequence>MKPLSSPLQQYWQTVVERLPEPLAEESLSAQAKSVLTFSDFVQDSVIAHPEWLTELESQPPQADEWQHYAAWLQEALCNVSDEAGLMRELRLFRRRIMVRIAWAQTLALVTEESILQQLSYLAETLIVAARDWLYDACCREWGTPCNAQGEAQPLLILGMGKLGGGELNFSSDIDLIFAWPEHGCTQGGRRELDNAQFFTRMGQRLIKVLDQPTQDGFVYRVDMRLRPFGESGPLVLSFAALEDYYQEQGRDWERYAMVKARIMGDSEGVYANELRAMLRPFVFRRYIDFSVIQSLRNMKGMIAREVRRRGLTDNIKLGAGGIREIEFIVQVFQLIRGGREPSLQSRSLLPTLSAIAELHLLSENDAEQLRVAYLFLRRLENLLQSINDEQTQTLPSDELNRARLAWAMDFADWPQLTGALTAHMTNVRRVFNELIGDDESETQEESLSEQWRELWQDALQEDDTTPVLAHLSEDDRKQVLTLIADFRKELDKRTIGPRGRQVLDHLMPHLLSDVCAREDAAVTLSRITALLVGIVTRTTYLELLSEFPAALKHLISLCAASPMIASQLARYPLLLDELLDPNTLYQPTATDAYRDELRQYLLRVPEDDEEQQLEALRQFKQAQLLRIAAADIAGTLPVMKVSDHLTWLAEAMIDAVVQQAWVQMVARYGKPNHLNEREGRGFAVVGYGKLGGWELGYSSDLDLIFLHDCPMDAMTDGEREIDGRQFYLRLAQRIMHLFSTRTSSGILYEVDARLRPSGAAGMLVTSAEAFADYQKNEAWTWEHQALVRARVVYGDPQLTAHFDAVRREIMTLPREGKTLQTEVREMREKMRAHLGNKHRDRFDIKADEGGITDIEFITQYLVLRYAHEKPKLTRWSDNVRILELLAQNDIMEEQEAMALTRAYTTLRDELHHLALQELPGHVSEDCFTAERELVRASWQKWLVEE</sequence>
<evidence type="ECO:0000269" key="1">
    <source>
    </source>
</evidence>
<evidence type="ECO:0000269" key="2">
    <source>
    </source>
</evidence>
<evidence type="ECO:0000269" key="3">
    <source>
    </source>
</evidence>
<evidence type="ECO:0000269" key="4">
    <source>
    </source>
</evidence>
<evidence type="ECO:0000269" key="5">
    <source>
    </source>
</evidence>
<evidence type="ECO:0000269" key="6">
    <source>
    </source>
</evidence>
<evidence type="ECO:0000269" key="7">
    <source>
    </source>
</evidence>
<evidence type="ECO:0000269" key="8">
    <source>
    </source>
</evidence>
<evidence type="ECO:0000269" key="9">
    <source>
    </source>
</evidence>
<evidence type="ECO:0000303" key="10">
    <source>
    </source>
</evidence>
<evidence type="ECO:0000303" key="11">
    <source>
    </source>
</evidence>
<evidence type="ECO:0000303" key="12">
    <source>
    </source>
</evidence>
<evidence type="ECO:0000303" key="13">
    <source>
    </source>
</evidence>
<evidence type="ECO:0000303" key="14">
    <source>
    </source>
</evidence>
<evidence type="ECO:0000303" key="15">
    <source>
    </source>
</evidence>
<evidence type="ECO:0000303" key="16">
    <source>
    </source>
</evidence>
<evidence type="ECO:0000305" key="17"/>
<evidence type="ECO:0000305" key="18">
    <source>
    </source>
</evidence>
<evidence type="ECO:0000305" key="19">
    <source>
    </source>
</evidence>
<evidence type="ECO:0000305" key="20">
    <source>
    </source>
</evidence>
<evidence type="ECO:0000305" key="21">
    <source>
    </source>
</evidence>
<evidence type="ECO:0000305" key="22">
    <source>
    </source>
</evidence>
<evidence type="ECO:0007829" key="23">
    <source>
        <dbReference type="PDB" id="1V4A"/>
    </source>
</evidence>
<evidence type="ECO:0007829" key="24">
    <source>
        <dbReference type="PDB" id="3K7D"/>
    </source>
</evidence>
<protein>
    <recommendedName>
        <fullName evidence="17">Bifunctional glutamine synthetase adenylyltransferase/adenylyl-removing enzyme</fullName>
    </recommendedName>
    <alternativeName>
        <fullName evidence="12">ATP:glutamine synthetase adenylyltransferase</fullName>
    </alternativeName>
    <alternativeName>
        <fullName evidence="16">ATase</fullName>
    </alternativeName>
    <domain>
        <recommendedName>
            <fullName evidence="21">Glutamine synthetase adenylyl-L-tyrosine phosphorylase</fullName>
            <ecNumber evidence="7 18 20 21 22">2.7.7.89</ecNumber>
        </recommendedName>
        <alternativeName>
            <fullName evidence="11">Adenylyl removase</fullName>
            <shortName evidence="11">AR</shortName>
            <shortName evidence="16">AT-N</shortName>
            <shortName evidence="10">AT-N440</shortName>
            <shortName evidence="14">P-I</shortName>
        </alternativeName>
    </domain>
    <domain>
        <recommendedName>
            <fullName evidence="13">Glutamine synthetase adenylyl transferase</fullName>
            <ecNumber evidence="6 22">2.7.7.42</ecNumber>
        </recommendedName>
        <alternativeName>
            <fullName evidence="11">Adenylyl transferase</fullName>
            <shortName evidence="11">AT</shortName>
            <shortName evidence="16">AT-C</shortName>
        </alternativeName>
    </domain>
</protein>
<gene>
    <name evidence="15" type="primary">glnE</name>
    <name type="ordered locus">b3053</name>
    <name type="ordered locus">JW3025</name>
</gene>
<feature type="chain" id="PRO_0000209244" description="Bifunctional glutamine synthetase adenylyltransferase/adenylyl-removing enzyme">
    <location>
        <begin position="1"/>
        <end position="946"/>
    </location>
</feature>
<feature type="region of interest" description="Adenylyl removase" evidence="19">
    <location>
        <begin position="1"/>
        <end position="440"/>
    </location>
</feature>
<feature type="region of interest" description="Linker" evidence="19">
    <location>
        <begin position="441"/>
        <end position="448"/>
    </location>
</feature>
<feature type="region of interest" description="Adenylyl transferase" evidence="19">
    <location>
        <begin position="449"/>
        <end position="946"/>
    </location>
</feature>
<feature type="sequence conflict" description="In Ref. 1; CAA79892." evidence="17" ref="1">
    <location>
        <position position="524"/>
    </location>
</feature>
<feature type="sequence conflict" description="In Ref. 1; CAA79892." evidence="17" ref="1">
    <original>QL</original>
    <variation>PV</variation>
    <location>
        <begin position="624"/>
        <end position="625"/>
    </location>
</feature>
<feature type="helix" evidence="23">
    <location>
        <begin position="6"/>
        <end position="16"/>
    </location>
</feature>
<feature type="helix" evidence="23">
    <location>
        <begin position="25"/>
        <end position="27"/>
    </location>
</feature>
<feature type="helix" evidence="23">
    <location>
        <begin position="30"/>
        <end position="38"/>
    </location>
</feature>
<feature type="helix" evidence="23">
    <location>
        <begin position="40"/>
        <end position="48"/>
    </location>
</feature>
<feature type="helix" evidence="23">
    <location>
        <begin position="51"/>
        <end position="58"/>
    </location>
</feature>
<feature type="helix" evidence="23">
    <location>
        <begin position="63"/>
        <end position="68"/>
    </location>
</feature>
<feature type="helix" evidence="23">
    <location>
        <begin position="69"/>
        <end position="76"/>
    </location>
</feature>
<feature type="turn" evidence="23">
    <location>
        <begin position="77"/>
        <end position="79"/>
    </location>
</feature>
<feature type="helix" evidence="23">
    <location>
        <begin position="83"/>
        <end position="106"/>
    </location>
</feature>
<feature type="helix" evidence="23">
    <location>
        <begin position="112"/>
        <end position="141"/>
    </location>
</feature>
<feature type="strand" evidence="23">
    <location>
        <begin position="156"/>
        <end position="159"/>
    </location>
</feature>
<feature type="helix" evidence="23">
    <location>
        <begin position="161"/>
        <end position="164"/>
    </location>
</feature>
<feature type="strand" evidence="23">
    <location>
        <begin position="174"/>
        <end position="180"/>
    </location>
</feature>
<feature type="helix" evidence="23">
    <location>
        <begin position="195"/>
        <end position="211"/>
    </location>
</feature>
<feature type="helix" evidence="23">
    <location>
        <begin position="230"/>
        <end position="232"/>
    </location>
</feature>
<feature type="strand" evidence="23">
    <location>
        <begin position="235"/>
        <end position="238"/>
    </location>
</feature>
<feature type="helix" evidence="23">
    <location>
        <begin position="239"/>
        <end position="249"/>
    </location>
</feature>
<feature type="helix" evidence="23">
    <location>
        <begin position="252"/>
        <end position="258"/>
    </location>
</feature>
<feature type="strand" evidence="23">
    <location>
        <begin position="262"/>
        <end position="265"/>
    </location>
</feature>
<feature type="helix" evidence="23">
    <location>
        <begin position="270"/>
        <end position="283"/>
    </location>
</feature>
<feature type="helix" evidence="23">
    <location>
        <begin position="290"/>
        <end position="310"/>
    </location>
</feature>
<feature type="turn" evidence="23">
    <location>
        <begin position="316"/>
        <end position="318"/>
    </location>
</feature>
<feature type="helix" evidence="23">
    <location>
        <begin position="323"/>
        <end position="337"/>
    </location>
</feature>
<feature type="turn" evidence="23">
    <location>
        <begin position="338"/>
        <end position="340"/>
    </location>
</feature>
<feature type="helix" evidence="23">
    <location>
        <begin position="342"/>
        <end position="344"/>
    </location>
</feature>
<feature type="helix" evidence="23">
    <location>
        <begin position="349"/>
        <end position="358"/>
    </location>
</feature>
<feature type="helix" evidence="23">
    <location>
        <begin position="364"/>
        <end position="385"/>
    </location>
</feature>
<feature type="turn" evidence="23">
    <location>
        <begin position="386"/>
        <end position="389"/>
    </location>
</feature>
<feature type="helix" evidence="23">
    <location>
        <begin position="399"/>
        <end position="408"/>
    </location>
</feature>
<feature type="helix" evidence="23">
    <location>
        <begin position="414"/>
        <end position="434"/>
    </location>
</feature>
<feature type="helix" evidence="24">
    <location>
        <begin position="450"/>
        <end position="457"/>
    </location>
</feature>
<feature type="helix" evidence="24">
    <location>
        <begin position="459"/>
        <end position="461"/>
    </location>
</feature>
<feature type="helix" evidence="24">
    <location>
        <begin position="467"/>
        <end position="469"/>
    </location>
</feature>
<feature type="helix" evidence="24">
    <location>
        <begin position="474"/>
        <end position="493"/>
    </location>
</feature>
<feature type="helix" evidence="24">
    <location>
        <begin position="498"/>
        <end position="515"/>
    </location>
</feature>
<feature type="helix" evidence="24">
    <location>
        <begin position="521"/>
        <end position="535"/>
    </location>
</feature>
<feature type="helix" evidence="24">
    <location>
        <begin position="539"/>
        <end position="547"/>
    </location>
</feature>
<feature type="helix" evidence="24">
    <location>
        <begin position="549"/>
        <end position="561"/>
    </location>
</feature>
<feature type="helix" evidence="24">
    <location>
        <begin position="563"/>
        <end position="571"/>
    </location>
</feature>
<feature type="helix" evidence="24">
    <location>
        <begin position="573"/>
        <end position="580"/>
    </location>
</feature>
<feature type="helix" evidence="24">
    <location>
        <begin position="582"/>
        <end position="585"/>
    </location>
</feature>
<feature type="helix" evidence="24">
    <location>
        <begin position="594"/>
        <end position="601"/>
    </location>
</feature>
<feature type="turn" evidence="24">
    <location>
        <begin position="602"/>
        <end position="604"/>
    </location>
</feature>
<feature type="helix" evidence="24">
    <location>
        <begin position="610"/>
        <end position="633"/>
    </location>
</feature>
<feature type="helix" evidence="24">
    <location>
        <begin position="639"/>
        <end position="641"/>
    </location>
</feature>
<feature type="helix" evidence="24">
    <location>
        <begin position="642"/>
        <end position="669"/>
    </location>
</feature>
<feature type="helix" evidence="24">
    <location>
        <begin position="673"/>
        <end position="675"/>
    </location>
</feature>
<feature type="strand" evidence="24">
    <location>
        <begin position="682"/>
        <end position="687"/>
    </location>
</feature>
<feature type="helix" evidence="24">
    <location>
        <begin position="689"/>
        <end position="692"/>
    </location>
</feature>
<feature type="strand" evidence="24">
    <location>
        <begin position="702"/>
        <end position="708"/>
    </location>
</feature>
<feature type="strand" evidence="24">
    <location>
        <begin position="715"/>
        <end position="720"/>
    </location>
</feature>
<feature type="helix" evidence="24">
    <location>
        <begin position="724"/>
        <end position="740"/>
    </location>
</feature>
<feature type="helix" evidence="24">
    <location>
        <begin position="759"/>
        <end position="761"/>
    </location>
</feature>
<feature type="strand" evidence="24">
    <location>
        <begin position="764"/>
        <end position="767"/>
    </location>
</feature>
<feature type="helix" evidence="24">
    <location>
        <begin position="768"/>
        <end position="777"/>
    </location>
</feature>
<feature type="helix" evidence="24">
    <location>
        <begin position="781"/>
        <end position="788"/>
    </location>
</feature>
<feature type="strand" evidence="24">
    <location>
        <begin position="791"/>
        <end position="794"/>
    </location>
</feature>
<feature type="helix" evidence="24">
    <location>
        <begin position="797"/>
        <end position="811"/>
    </location>
</feature>
<feature type="helix" evidence="24">
    <location>
        <begin position="817"/>
        <end position="834"/>
    </location>
</feature>
<feature type="strand" evidence="24">
    <location>
        <begin position="842"/>
        <end position="844"/>
    </location>
</feature>
<feature type="turn" evidence="24">
    <location>
        <begin position="845"/>
        <end position="847"/>
    </location>
</feature>
<feature type="helix" evidence="24">
    <location>
        <begin position="852"/>
        <end position="866"/>
    </location>
</feature>
<feature type="turn" evidence="24">
    <location>
        <begin position="867"/>
        <end position="869"/>
    </location>
</feature>
<feature type="helix" evidence="24">
    <location>
        <begin position="871"/>
        <end position="874"/>
    </location>
</feature>
<feature type="helix" evidence="24">
    <location>
        <begin position="879"/>
        <end position="888"/>
    </location>
</feature>
<feature type="helix" evidence="24">
    <location>
        <begin position="894"/>
        <end position="916"/>
    </location>
</feature>
<feature type="strand" evidence="24">
    <location>
        <begin position="921"/>
        <end position="924"/>
    </location>
</feature>
<feature type="turn" evidence="24">
    <location>
        <begin position="925"/>
        <end position="928"/>
    </location>
</feature>
<feature type="helix" evidence="24">
    <location>
        <begin position="929"/>
        <end position="943"/>
    </location>
</feature>
<name>GLNE_ECOLI</name>
<proteinExistence type="evidence at protein level"/>
<reference key="1">
    <citation type="journal article" date="1993" name="Mol. Microbiol.">
        <title>The genes of the glutamine synthetase adenylylation cascade are not regulated by nitrogen in Escherichia coli.</title>
        <authorList>
            <person name="van Heeswijk W.C."/>
            <person name="Rabenberg M."/>
            <person name="Westerhoff H.V."/>
            <person name="Kahn D.D."/>
        </authorList>
    </citation>
    <scope>NUCLEOTIDE SEQUENCE [GENOMIC DNA]</scope>
    <scope>FUNCTION</scope>
    <source>
        <strain>K12 / CS520</strain>
    </source>
</reference>
<reference key="2">
    <citation type="journal article" date="1997" name="Science">
        <title>The complete genome sequence of Escherichia coli K-12.</title>
        <authorList>
            <person name="Blattner F.R."/>
            <person name="Plunkett G. III"/>
            <person name="Bloch C.A."/>
            <person name="Perna N.T."/>
            <person name="Burland V."/>
            <person name="Riley M."/>
            <person name="Collado-Vides J."/>
            <person name="Glasner J.D."/>
            <person name="Rode C.K."/>
            <person name="Mayhew G.F."/>
            <person name="Gregor J."/>
            <person name="Davis N.W."/>
            <person name="Kirkpatrick H.A."/>
            <person name="Goeden M.A."/>
            <person name="Rose D.J."/>
            <person name="Mau B."/>
            <person name="Shao Y."/>
        </authorList>
    </citation>
    <scope>NUCLEOTIDE SEQUENCE [LARGE SCALE GENOMIC DNA]</scope>
    <source>
        <strain>K12 / MG1655 / ATCC 47076</strain>
    </source>
</reference>
<reference key="3">
    <citation type="journal article" date="2006" name="Mol. Syst. Biol.">
        <title>Highly accurate genome sequences of Escherichia coli K-12 strains MG1655 and W3110.</title>
        <authorList>
            <person name="Hayashi K."/>
            <person name="Morooka N."/>
            <person name="Yamamoto Y."/>
            <person name="Fujita K."/>
            <person name="Isono K."/>
            <person name="Choi S."/>
            <person name="Ohtsubo E."/>
            <person name="Baba T."/>
            <person name="Wanner B.L."/>
            <person name="Mori H."/>
            <person name="Horiuchi T."/>
        </authorList>
    </citation>
    <scope>NUCLEOTIDE SEQUENCE [LARGE SCALE GENOMIC DNA]</scope>
    <source>
        <strain>K12 / W3110 / ATCC 27325 / DSM 5911</strain>
    </source>
</reference>
<reference key="4">
    <citation type="journal article" date="1967" name="Proc. Natl. Acad. Sci. U.S.A.">
        <title>Regulation of glutamine synthetase. 8. ATP: glutamine synthetase adenylyltransferase, an enzyme that catalyzes alterations in the regulatory properties of glutamine synthetase.</title>
        <authorList>
            <person name="Kingdon H.S."/>
            <person name="Shapiro B.M."/>
            <person name="Stadtman E.R."/>
        </authorList>
    </citation>
    <scope>FUNCTION</scope>
    <scope>ACTIVITY REGULATION</scope>
    <scope>COFACTOR</scope>
</reference>
<reference key="5">
    <citation type="journal article" date="1969" name="Biochemistry">
        <title>The glutamine synthetase deadenylylating enzyme system from Escherichia coli. Resolution into two components, specific nucleotide stimulation, and cofactor requirements.</title>
        <authorList>
            <person name="Shapiro B.M."/>
        </authorList>
    </citation>
    <scope>FUNCTION</scope>
    <scope>CATALYTIC ACTIVITY</scope>
    <scope>BIOPHYSICOCHEMICAL PROPERTIES</scope>
    <scope>COFACTOR</scope>
    <scope>ACTIVITY REGULATION</scope>
</reference>
<reference key="6">
    <citation type="journal article" date="1970" name="Biochem. Biophys. Res. Commun.">
        <title>Glutamine synthetase deadenylation: a phosphorolytic reaction yielding ADP as nucleotide product.</title>
        <authorList>
            <person name="Anderson W.B."/>
            <person name="Stadtman E.R."/>
        </authorList>
    </citation>
    <scope>FUNCTION</scope>
    <scope>CATALYTIC ACTIVITY</scope>
</reference>
<reference key="7">
    <citation type="journal article" date="1970" name="Eur. J. Biochem.">
        <title>ATP: glutamine synthetase adenylyltransferase from Escherichia coli B. Purification and properties.</title>
        <authorList>
            <person name="Ebner E."/>
            <person name="Wolf D."/>
            <person name="Gancedo C."/>
            <person name="Elsaesser S."/>
            <person name="Holzer H."/>
        </authorList>
    </citation>
    <scope>FUNCTION</scope>
    <scope>CATALYTIC ACTIVITY</scope>
    <scope>COFACTOR</scope>
    <scope>SUBUNIT</scope>
    <scope>BIOPHYSICOCHEMICAL PROPERTIES</scope>
    <scope>ACTIVITY REGULATION</scope>
    <scope>SUBSTRATE SPECIFICITY</scope>
</reference>
<reference key="8">
    <citation type="journal article" date="1971" name="Arch. Biochem. Biophys.">
        <title>Purification and functional roles of the P I and P II components of Escherichia coli glutamine synthetase deadenylylation system.</title>
        <authorList>
            <person name="Anderson W.B."/>
            <person name="Stadtman E.R."/>
        </authorList>
    </citation>
    <scope>FUNCTION</scope>
    <scope>CATALYTIC ACTIVITY</scope>
    <scope>COFACTOR</scope>
    <scope>ACTIVITY REGULATION</scope>
</reference>
<reference key="9">
    <citation type="journal article" date="1978" name="Arch. Biochem. Biophys.">
        <title>Cascade control of E. coli glutamine synthetase. II. Metabolite regulation of the enzymes in the cascade.</title>
        <authorList>
            <person name="Engleman E.G."/>
            <person name="Francis S.H."/>
        </authorList>
    </citation>
    <scope>ACTIVITY REGULATION</scope>
</reference>
<reference key="10">
    <citation type="journal article" date="1997" name="EMBO J.">
        <title>The two opposing activities of adenylyl transferase reside in distinct homologous domains, with intramolecular signal transduction.</title>
        <authorList>
            <person name="Jaggi R."/>
            <person name="van Heeswijk W.C."/>
            <person name="Westerhoff H.V."/>
            <person name="Ollis D.L."/>
            <person name="Vasudevan S.G."/>
        </authorList>
    </citation>
    <scope>FUNCTION</scope>
    <scope>CATALYTIC ACTIVITY</scope>
    <scope>ACTIVITY REGULATION</scope>
</reference>
<reference key="11">
    <citation type="journal article" date="2004" name="Protein Expr. Purif.">
        <title>Expression, purification, crystallization, and preliminary X-ray analysis of the N-terminal domain of Escherichia coli adenylyl transferase.</title>
        <authorList>
            <person name="Xu Y."/>
            <person name="Wen D."/>
            <person name="Clancy P."/>
            <person name="Carr P.D."/>
            <person name="Ollis D.L."/>
            <person name="Vasudevan S.G."/>
        </authorList>
    </citation>
    <scope>FUNCTION</scope>
    <scope>CATALYTIC ACTIVITY</scope>
    <scope>ACTIVITY REGULATION</scope>
</reference>
<reference key="12">
    <citation type="journal article" date="2004" name="Structure">
        <title>Structure of the N-terminal domain of Escherichia coli glutamine synthetase adenylyltransferase.</title>
        <authorList>
            <person name="Xu Y."/>
            <person name="Zhang R."/>
            <person name="Joachimiak A."/>
            <person name="Carr P.D."/>
            <person name="Huber T."/>
            <person name="Vasudevan S.G."/>
            <person name="Ollis D.L."/>
        </authorList>
    </citation>
    <scope>X-RAY CRYSTALLOGRAPHY (2.0 ANGSTROMS) OF 1-440</scope>
</reference>
<reference key="13">
    <citation type="journal article" date="2010" name="J. Mol. Biol.">
        <title>Structure of the adenylylation domain of E. coli glutamine synthetase adenylyl transferase: evidence for gene duplication and evolution of a new active site.</title>
        <authorList>
            <person name="Xu Y."/>
            <person name="Carr P.D."/>
            <person name="Vasudevan S.G."/>
            <person name="Ollis D.L."/>
        </authorList>
    </citation>
    <scope>X-RAY CRYSTALLOGRAPHY (2.40 ANGSTROMS) OF 449-946</scope>
</reference>
<keyword id="KW-0002">3D-structure</keyword>
<keyword id="KW-0067">ATP-binding</keyword>
<keyword id="KW-0460">Magnesium</keyword>
<keyword id="KW-0511">Multifunctional enzyme</keyword>
<keyword id="KW-0547">Nucleotide-binding</keyword>
<keyword id="KW-0548">Nucleotidyltransferase</keyword>
<keyword id="KW-1185">Reference proteome</keyword>
<keyword id="KW-0808">Transferase</keyword>
<comment type="function">
    <text evidence="1 3 4 5 6 7 8 9">Involved in the regulation of glutamine synthetase GlnA, a key enzyme in the process to assimilate ammonia (PubMed:8412694). When cellular nitrogen levels are high, the C-terminal adenylyl transferase inactivates GlnA by covalent transfer of an adenylyl group from ATP to 'Tyr-398' of GlnA, thus reducing its activity (PubMed:4920894, PubMed:9312015). Conversely, when nitrogen levels are low, the N-terminal adenylyl removase (AR) activates GlnA by removing the adenylyl group by phosphorolysis, increasing its activity (PubMed:14766310, PubMed:4893578, PubMed:4920873, PubMed:4934180, PubMed:9312015). The regulatory region of GlnE binds the signal transduction protein PII (GlnB) which indicates the nitrogen status of the cell (PubMed:8412694).</text>
</comment>
<comment type="catalytic activity">
    <reaction evidence="7 18 20 21 22">
        <text>[glutamine synthetase]-O(4)-(5'-adenylyl)-L-tyrosine + phosphate = [glutamine synthetase]-L-tyrosine + ADP</text>
        <dbReference type="Rhea" id="RHEA:43716"/>
        <dbReference type="Rhea" id="RHEA-COMP:10660"/>
        <dbReference type="Rhea" id="RHEA-COMP:10661"/>
        <dbReference type="ChEBI" id="CHEBI:43474"/>
        <dbReference type="ChEBI" id="CHEBI:46858"/>
        <dbReference type="ChEBI" id="CHEBI:83624"/>
        <dbReference type="ChEBI" id="CHEBI:456216"/>
        <dbReference type="EC" id="2.7.7.89"/>
    </reaction>
</comment>
<comment type="catalytic activity">
    <reaction evidence="6 22">
        <text>[glutamine synthetase]-L-tyrosine + ATP = [glutamine synthetase]-O(4)-(5'-adenylyl)-L-tyrosine + diphosphate</text>
        <dbReference type="Rhea" id="RHEA:18589"/>
        <dbReference type="Rhea" id="RHEA-COMP:10660"/>
        <dbReference type="Rhea" id="RHEA-COMP:10661"/>
        <dbReference type="ChEBI" id="CHEBI:30616"/>
        <dbReference type="ChEBI" id="CHEBI:33019"/>
        <dbReference type="ChEBI" id="CHEBI:46858"/>
        <dbReference type="ChEBI" id="CHEBI:83624"/>
        <dbReference type="EC" id="2.7.7.42"/>
    </reaction>
</comment>
<comment type="cofactor">
    <cofactor evidence="3 4 6 7">
        <name>Mg(2+)</name>
        <dbReference type="ChEBI" id="CHEBI:18420"/>
    </cofactor>
    <text evidence="3 4 6 7">Can also use Mn(2+).</text>
</comment>
<comment type="activity regulation">
    <text evidence="1 2 3 4 6 7 9">The adenylation activity is stimulated by glutamine and PII (GlnB), and inhibited by 2-oxoglutarate (PubMed:33597, PubMed:4867671, PubMed:4920894, PubMed:9312015). Deadenylation activity is stimulated by PII-UMP (GlnB-UMP) and 2-oxoglutarate, and inhibited by glutamine (PubMed:14766310, PubMed:33597, PubMed:4893578, PubMed:4934180, PubMed:9312015).</text>
</comment>
<comment type="biophysicochemical properties">
    <kinetics>
        <KM evidence="4">4 uM for adenylyl</KM>
        <KM evidence="6">5 uM for [L-glutamate:ammonia ligase (ADP-forming)]</KM>
        <KM evidence="6">150 uM for ATP</KM>
    </kinetics>
    <phDependence>
        <text evidence="4 6">Optimum pH is between 7.3 and 7.6 (PubMed:4893578, PubMed:4920894). The enzyme is stable between pH 4 and 9 (PubMed:4920894).</text>
    </phDependence>
</comment>
<comment type="subunit">
    <text evidence="6">Monomer.</text>
</comment>
<comment type="similarity">
    <text evidence="17">Belongs to the GlnE family.</text>
</comment>
<accession>P30870</accession>
<accession>P78107</accession>
<accession>Q2M9F2</accession>